<protein>
    <recommendedName>
        <fullName evidence="1">Threonine--tRNA ligase</fullName>
        <ecNumber evidence="1">6.1.1.3</ecNumber>
    </recommendedName>
    <alternativeName>
        <fullName evidence="1">Threonyl-tRNA synthetase</fullName>
        <shortName evidence="1">ThrRS</shortName>
    </alternativeName>
</protein>
<organism>
    <name type="scientific">Xanthomonas oryzae pv. oryzae (strain MAFF 311018)</name>
    <dbReference type="NCBI Taxonomy" id="342109"/>
    <lineage>
        <taxon>Bacteria</taxon>
        <taxon>Pseudomonadati</taxon>
        <taxon>Pseudomonadota</taxon>
        <taxon>Gammaproteobacteria</taxon>
        <taxon>Lysobacterales</taxon>
        <taxon>Lysobacteraceae</taxon>
        <taxon>Xanthomonas</taxon>
    </lineage>
</organism>
<name>SYT_XANOM</name>
<feature type="chain" id="PRO_1000020554" description="Threonine--tRNA ligase">
    <location>
        <begin position="1"/>
        <end position="634"/>
    </location>
</feature>
<feature type="domain" description="TGS" evidence="2">
    <location>
        <begin position="1"/>
        <end position="61"/>
    </location>
</feature>
<feature type="region of interest" description="Catalytic" evidence="1">
    <location>
        <begin position="243"/>
        <end position="534"/>
    </location>
</feature>
<feature type="binding site" evidence="1">
    <location>
        <position position="334"/>
    </location>
    <ligand>
        <name>Zn(2+)</name>
        <dbReference type="ChEBI" id="CHEBI:29105"/>
    </ligand>
</feature>
<feature type="binding site" evidence="1">
    <location>
        <position position="385"/>
    </location>
    <ligand>
        <name>Zn(2+)</name>
        <dbReference type="ChEBI" id="CHEBI:29105"/>
    </ligand>
</feature>
<feature type="binding site" evidence="1">
    <location>
        <position position="511"/>
    </location>
    <ligand>
        <name>Zn(2+)</name>
        <dbReference type="ChEBI" id="CHEBI:29105"/>
    </ligand>
</feature>
<sequence>MINITLPDGSRREFESPVSVMQVAQSIGAGLAKATIAGRVDGQLVDASDVIDHDASLRIITAKDAEGVEIIRHSCAHLVGHAVKQLYPEVKMVIGPVIAEGFYYDIYSERPFTPEDMAAIEQRMQALIAQDYDVIKKVTPRAEVIEVFAQRGEEYKLRLIDDMSDDITAMGLYYHQEYVDMCRGPHVPNTRFLKAFKLTRISGAYWRGDAKNEQLQRIYGTAWADKKQLDAYILRMEEADKRDHRRIGKAQDLFHLQEEAPGLVFWHPKGWSLWQVVEQYMRKVYRDSGYGEVRCPQILDVSLWQKSGHWDNYQDAMFFTESEKRTYAVKPMNCPGHVQVFNQGLHSYRDLPIRYGEFGACHRNEPSGALHGILRVRGFTQDDGHVFCLESQIESEVTAFHQQALAVYTAFGFDDIQIKIALRPEKRLGDDATWDKAEAALRSALGVCGVEWQELPGEGAFYGPKIEYHLKDAIGRTWQLGTMQVDFMMPGRLGAEYVDENSQKKHPVMLHRAIVGSMERFIGILIEHHAGAFPSWLAPVQVVVANITDAQADYVDAVRKTLANQGFRVSADLRNEKIGYKIREHTLQRVPYLLVVGDREKENGAVAVRTRSGEDLGTMTVSAFIERLQAEQAA</sequence>
<dbReference type="EC" id="6.1.1.3" evidence="1"/>
<dbReference type="EMBL" id="AP008229">
    <property type="protein sequence ID" value="BAE69782.1"/>
    <property type="molecule type" value="Genomic_DNA"/>
</dbReference>
<dbReference type="RefSeq" id="WP_011409044.1">
    <property type="nucleotide sequence ID" value="NC_007705.1"/>
</dbReference>
<dbReference type="SMR" id="Q2P0Z5"/>
<dbReference type="KEGG" id="xom:XOO3027"/>
<dbReference type="HOGENOM" id="CLU_008554_0_1_6"/>
<dbReference type="GO" id="GO:0005829">
    <property type="term" value="C:cytosol"/>
    <property type="evidence" value="ECO:0007669"/>
    <property type="project" value="TreeGrafter"/>
</dbReference>
<dbReference type="GO" id="GO:0005524">
    <property type="term" value="F:ATP binding"/>
    <property type="evidence" value="ECO:0007669"/>
    <property type="project" value="UniProtKB-UniRule"/>
</dbReference>
<dbReference type="GO" id="GO:0046872">
    <property type="term" value="F:metal ion binding"/>
    <property type="evidence" value="ECO:0007669"/>
    <property type="project" value="UniProtKB-KW"/>
</dbReference>
<dbReference type="GO" id="GO:0004829">
    <property type="term" value="F:threonine-tRNA ligase activity"/>
    <property type="evidence" value="ECO:0007669"/>
    <property type="project" value="UniProtKB-UniRule"/>
</dbReference>
<dbReference type="GO" id="GO:0000049">
    <property type="term" value="F:tRNA binding"/>
    <property type="evidence" value="ECO:0007669"/>
    <property type="project" value="UniProtKB-KW"/>
</dbReference>
<dbReference type="GO" id="GO:0006435">
    <property type="term" value="P:threonyl-tRNA aminoacylation"/>
    <property type="evidence" value="ECO:0007669"/>
    <property type="project" value="UniProtKB-UniRule"/>
</dbReference>
<dbReference type="CDD" id="cd01667">
    <property type="entry name" value="TGS_ThrRS"/>
    <property type="match status" value="1"/>
</dbReference>
<dbReference type="CDD" id="cd00860">
    <property type="entry name" value="ThrRS_anticodon"/>
    <property type="match status" value="1"/>
</dbReference>
<dbReference type="CDD" id="cd00771">
    <property type="entry name" value="ThrRS_core"/>
    <property type="match status" value="1"/>
</dbReference>
<dbReference type="FunFam" id="3.10.20.30:FF:000005">
    <property type="entry name" value="Threonine--tRNA ligase"/>
    <property type="match status" value="1"/>
</dbReference>
<dbReference type="FunFam" id="3.30.54.20:FF:000002">
    <property type="entry name" value="Threonine--tRNA ligase"/>
    <property type="match status" value="1"/>
</dbReference>
<dbReference type="FunFam" id="3.30.930.10:FF:000002">
    <property type="entry name" value="Threonine--tRNA ligase"/>
    <property type="match status" value="1"/>
</dbReference>
<dbReference type="FunFam" id="3.40.50.800:FF:000001">
    <property type="entry name" value="Threonine--tRNA ligase"/>
    <property type="match status" value="1"/>
</dbReference>
<dbReference type="FunFam" id="3.30.980.10:FF:000005">
    <property type="entry name" value="Threonyl-tRNA synthetase, mitochondrial"/>
    <property type="match status" value="1"/>
</dbReference>
<dbReference type="Gene3D" id="3.10.20.30">
    <property type="match status" value="1"/>
</dbReference>
<dbReference type="Gene3D" id="3.30.54.20">
    <property type="match status" value="1"/>
</dbReference>
<dbReference type="Gene3D" id="3.40.50.800">
    <property type="entry name" value="Anticodon-binding domain"/>
    <property type="match status" value="1"/>
</dbReference>
<dbReference type="Gene3D" id="3.30.930.10">
    <property type="entry name" value="Bira Bifunctional Protein, Domain 2"/>
    <property type="match status" value="1"/>
</dbReference>
<dbReference type="Gene3D" id="3.30.980.10">
    <property type="entry name" value="Threonyl-trna Synthetase, Chain A, domain 2"/>
    <property type="match status" value="1"/>
</dbReference>
<dbReference type="HAMAP" id="MF_00184">
    <property type="entry name" value="Thr_tRNA_synth"/>
    <property type="match status" value="1"/>
</dbReference>
<dbReference type="InterPro" id="IPR002314">
    <property type="entry name" value="aa-tRNA-synt_IIb"/>
</dbReference>
<dbReference type="InterPro" id="IPR006195">
    <property type="entry name" value="aa-tRNA-synth_II"/>
</dbReference>
<dbReference type="InterPro" id="IPR045864">
    <property type="entry name" value="aa-tRNA-synth_II/BPL/LPL"/>
</dbReference>
<dbReference type="InterPro" id="IPR004154">
    <property type="entry name" value="Anticodon-bd"/>
</dbReference>
<dbReference type="InterPro" id="IPR036621">
    <property type="entry name" value="Anticodon-bd_dom_sf"/>
</dbReference>
<dbReference type="InterPro" id="IPR012675">
    <property type="entry name" value="Beta-grasp_dom_sf"/>
</dbReference>
<dbReference type="InterPro" id="IPR004095">
    <property type="entry name" value="TGS"/>
</dbReference>
<dbReference type="InterPro" id="IPR012676">
    <property type="entry name" value="TGS-like"/>
</dbReference>
<dbReference type="InterPro" id="IPR002320">
    <property type="entry name" value="Thr-tRNA-ligase_IIa"/>
</dbReference>
<dbReference type="InterPro" id="IPR018163">
    <property type="entry name" value="Thr/Ala-tRNA-synth_IIc_edit"/>
</dbReference>
<dbReference type="InterPro" id="IPR047246">
    <property type="entry name" value="ThrRS_anticodon"/>
</dbReference>
<dbReference type="InterPro" id="IPR033728">
    <property type="entry name" value="ThrRS_core"/>
</dbReference>
<dbReference type="InterPro" id="IPR012947">
    <property type="entry name" value="tRNA_SAD"/>
</dbReference>
<dbReference type="NCBIfam" id="TIGR00418">
    <property type="entry name" value="thrS"/>
    <property type="match status" value="1"/>
</dbReference>
<dbReference type="PANTHER" id="PTHR11451:SF44">
    <property type="entry name" value="THREONINE--TRNA LIGASE, CHLOROPLASTIC_MITOCHONDRIAL 2"/>
    <property type="match status" value="1"/>
</dbReference>
<dbReference type="PANTHER" id="PTHR11451">
    <property type="entry name" value="THREONINE-TRNA LIGASE"/>
    <property type="match status" value="1"/>
</dbReference>
<dbReference type="Pfam" id="PF03129">
    <property type="entry name" value="HGTP_anticodon"/>
    <property type="match status" value="1"/>
</dbReference>
<dbReference type="Pfam" id="PF02824">
    <property type="entry name" value="TGS"/>
    <property type="match status" value="1"/>
</dbReference>
<dbReference type="Pfam" id="PF00587">
    <property type="entry name" value="tRNA-synt_2b"/>
    <property type="match status" value="1"/>
</dbReference>
<dbReference type="Pfam" id="PF07973">
    <property type="entry name" value="tRNA_SAD"/>
    <property type="match status" value="1"/>
</dbReference>
<dbReference type="PRINTS" id="PR01047">
    <property type="entry name" value="TRNASYNTHTHR"/>
</dbReference>
<dbReference type="SMART" id="SM00863">
    <property type="entry name" value="tRNA_SAD"/>
    <property type="match status" value="1"/>
</dbReference>
<dbReference type="SUPFAM" id="SSF52954">
    <property type="entry name" value="Class II aaRS ABD-related"/>
    <property type="match status" value="1"/>
</dbReference>
<dbReference type="SUPFAM" id="SSF55681">
    <property type="entry name" value="Class II aaRS and biotin synthetases"/>
    <property type="match status" value="1"/>
</dbReference>
<dbReference type="SUPFAM" id="SSF81271">
    <property type="entry name" value="TGS-like"/>
    <property type="match status" value="1"/>
</dbReference>
<dbReference type="SUPFAM" id="SSF55186">
    <property type="entry name" value="ThrRS/AlaRS common domain"/>
    <property type="match status" value="1"/>
</dbReference>
<dbReference type="PROSITE" id="PS50862">
    <property type="entry name" value="AA_TRNA_LIGASE_II"/>
    <property type="match status" value="1"/>
</dbReference>
<dbReference type="PROSITE" id="PS51880">
    <property type="entry name" value="TGS"/>
    <property type="match status" value="1"/>
</dbReference>
<gene>
    <name evidence="1" type="primary">thrS</name>
    <name type="ordered locus">XOO3027</name>
</gene>
<evidence type="ECO:0000255" key="1">
    <source>
        <dbReference type="HAMAP-Rule" id="MF_00184"/>
    </source>
</evidence>
<evidence type="ECO:0000255" key="2">
    <source>
        <dbReference type="PROSITE-ProRule" id="PRU01228"/>
    </source>
</evidence>
<reference key="1">
    <citation type="journal article" date="2005" name="Jpn. Agric. Res. Q.">
        <title>Genome sequence of Xanthomonas oryzae pv. oryzae suggests contribution of large numbers of effector genes and insertion sequences to its race diversity.</title>
        <authorList>
            <person name="Ochiai H."/>
            <person name="Inoue Y."/>
            <person name="Takeya M."/>
            <person name="Sasaki A."/>
            <person name="Kaku H."/>
        </authorList>
    </citation>
    <scope>NUCLEOTIDE SEQUENCE [LARGE SCALE GENOMIC DNA]</scope>
    <source>
        <strain>MAFF 311018</strain>
    </source>
</reference>
<comment type="function">
    <text evidence="1">Catalyzes the attachment of threonine to tRNA(Thr) in a two-step reaction: L-threonine is first activated by ATP to form Thr-AMP and then transferred to the acceptor end of tRNA(Thr). Also edits incorrectly charged L-seryl-tRNA(Thr).</text>
</comment>
<comment type="catalytic activity">
    <reaction evidence="1">
        <text>tRNA(Thr) + L-threonine + ATP = L-threonyl-tRNA(Thr) + AMP + diphosphate + H(+)</text>
        <dbReference type="Rhea" id="RHEA:24624"/>
        <dbReference type="Rhea" id="RHEA-COMP:9670"/>
        <dbReference type="Rhea" id="RHEA-COMP:9704"/>
        <dbReference type="ChEBI" id="CHEBI:15378"/>
        <dbReference type="ChEBI" id="CHEBI:30616"/>
        <dbReference type="ChEBI" id="CHEBI:33019"/>
        <dbReference type="ChEBI" id="CHEBI:57926"/>
        <dbReference type="ChEBI" id="CHEBI:78442"/>
        <dbReference type="ChEBI" id="CHEBI:78534"/>
        <dbReference type="ChEBI" id="CHEBI:456215"/>
        <dbReference type="EC" id="6.1.1.3"/>
    </reaction>
</comment>
<comment type="cofactor">
    <cofactor evidence="1">
        <name>Zn(2+)</name>
        <dbReference type="ChEBI" id="CHEBI:29105"/>
    </cofactor>
    <text evidence="1">Binds 1 zinc ion per subunit.</text>
</comment>
<comment type="subunit">
    <text evidence="1">Homodimer.</text>
</comment>
<comment type="subcellular location">
    <subcellularLocation>
        <location evidence="1">Cytoplasm</location>
    </subcellularLocation>
</comment>
<comment type="similarity">
    <text evidence="1">Belongs to the class-II aminoacyl-tRNA synthetase family.</text>
</comment>
<keyword id="KW-0030">Aminoacyl-tRNA synthetase</keyword>
<keyword id="KW-0067">ATP-binding</keyword>
<keyword id="KW-0963">Cytoplasm</keyword>
<keyword id="KW-0436">Ligase</keyword>
<keyword id="KW-0479">Metal-binding</keyword>
<keyword id="KW-0547">Nucleotide-binding</keyword>
<keyword id="KW-0648">Protein biosynthesis</keyword>
<keyword id="KW-0694">RNA-binding</keyword>
<keyword id="KW-0820">tRNA-binding</keyword>
<keyword id="KW-0862">Zinc</keyword>
<proteinExistence type="inferred from homology"/>
<accession>Q2P0Z5</accession>